<keyword id="KW-0010">Activator</keyword>
<keyword id="KW-0539">Nucleus</keyword>
<keyword id="KW-1185">Reference proteome</keyword>
<keyword id="KW-0804">Transcription</keyword>
<keyword id="KW-0805">Transcription regulation</keyword>
<organism>
    <name type="scientific">Coccidioides immitis (strain RS)</name>
    <name type="common">Valley fever fungus</name>
    <dbReference type="NCBI Taxonomy" id="246410"/>
    <lineage>
        <taxon>Eukaryota</taxon>
        <taxon>Fungi</taxon>
        <taxon>Dikarya</taxon>
        <taxon>Ascomycota</taxon>
        <taxon>Pezizomycotina</taxon>
        <taxon>Eurotiomycetes</taxon>
        <taxon>Eurotiomycetidae</taxon>
        <taxon>Onygenales</taxon>
        <taxon>Onygenaceae</taxon>
        <taxon>Coccidioides</taxon>
    </lineage>
</organism>
<gene>
    <name type="primary">NUT2</name>
    <name type="synonym">MED10</name>
    <name type="ORF">CIMG_03856</name>
</gene>
<proteinExistence type="inferred from homology"/>
<sequence>MAPITLSQIDEDLKDVIQTFFEIQSAVHGYLGPETQQELVKKLKSLTVSLQTLSAHAAPDPSYVQSPPSRTGLSPADPPVQSIQLPPEIIDYVDAARNPDIYTREFVELVQKSNQELKGKMEAFASFRDVLAKEMASAMPECKKEVERVVKATGGSVDGGGCG</sequence>
<accession>Q1E0Q7</accession>
<accession>J3KCM5</accession>
<feature type="chain" id="PRO_0000303169" description="Mediator of RNA polymerase II transcription subunit 10">
    <location>
        <begin position="1"/>
        <end position="163"/>
    </location>
</feature>
<feature type="region of interest" description="Disordered" evidence="2">
    <location>
        <begin position="57"/>
        <end position="79"/>
    </location>
</feature>
<feature type="compositionally biased region" description="Polar residues" evidence="2">
    <location>
        <begin position="63"/>
        <end position="72"/>
    </location>
</feature>
<dbReference type="EMBL" id="GG704916">
    <property type="protein sequence ID" value="EAS32832.3"/>
    <property type="molecule type" value="Genomic_DNA"/>
</dbReference>
<dbReference type="RefSeq" id="XP_001244415.2">
    <property type="nucleotide sequence ID" value="XM_001244414.2"/>
</dbReference>
<dbReference type="SMR" id="Q1E0Q7"/>
<dbReference type="FunCoup" id="Q1E0Q7">
    <property type="interactions" value="540"/>
</dbReference>
<dbReference type="STRING" id="246410.Q1E0Q7"/>
<dbReference type="GeneID" id="4562685"/>
<dbReference type="KEGG" id="cim:CIMG_03856"/>
<dbReference type="VEuPathDB" id="FungiDB:CIMG_03856"/>
<dbReference type="InParanoid" id="Q1E0Q7"/>
<dbReference type="OMA" id="QYQRAKM"/>
<dbReference type="OrthoDB" id="337270at2759"/>
<dbReference type="Proteomes" id="UP000001261">
    <property type="component" value="Unassembled WGS sequence"/>
</dbReference>
<dbReference type="GO" id="GO:0016592">
    <property type="term" value="C:mediator complex"/>
    <property type="evidence" value="ECO:0007669"/>
    <property type="project" value="InterPro"/>
</dbReference>
<dbReference type="GO" id="GO:0003712">
    <property type="term" value="F:transcription coregulator activity"/>
    <property type="evidence" value="ECO:0007669"/>
    <property type="project" value="InterPro"/>
</dbReference>
<dbReference type="GO" id="GO:0006357">
    <property type="term" value="P:regulation of transcription by RNA polymerase II"/>
    <property type="evidence" value="ECO:0007669"/>
    <property type="project" value="InterPro"/>
</dbReference>
<dbReference type="InterPro" id="IPR019145">
    <property type="entry name" value="Mediator_Med10"/>
</dbReference>
<dbReference type="Pfam" id="PF09748">
    <property type="entry name" value="Med10"/>
    <property type="match status" value="1"/>
</dbReference>
<name>MED10_COCIM</name>
<comment type="function">
    <text evidence="1">Component of the Mediator complex, a coactivator involved in the regulated transcription of nearly all RNA polymerase II-dependent genes. Mediator functions as a bridge to convey information from gene-specific regulatory proteins to the basal RNA polymerase II transcription machinery. Mediator is recruited to promoters by direct interactions with regulatory proteins and serves as a scaffold for the assembly of a functional preinitiation complex with RNA polymerase II and the general transcription factors (By similarity).</text>
</comment>
<comment type="subunit">
    <text evidence="1">Component of the Mediator complex.</text>
</comment>
<comment type="subcellular location">
    <subcellularLocation>
        <location evidence="1">Nucleus</location>
    </subcellularLocation>
</comment>
<comment type="similarity">
    <text evidence="3">Belongs to the Mediator complex subunit 10 family.</text>
</comment>
<evidence type="ECO:0000250" key="1"/>
<evidence type="ECO:0000256" key="2">
    <source>
        <dbReference type="SAM" id="MobiDB-lite"/>
    </source>
</evidence>
<evidence type="ECO:0000305" key="3"/>
<reference key="1">
    <citation type="journal article" date="2009" name="Genome Res.">
        <title>Comparative genomic analyses of the human fungal pathogens Coccidioides and their relatives.</title>
        <authorList>
            <person name="Sharpton T.J."/>
            <person name="Stajich J.E."/>
            <person name="Rounsley S.D."/>
            <person name="Gardner M.J."/>
            <person name="Wortman J.R."/>
            <person name="Jordar V.S."/>
            <person name="Maiti R."/>
            <person name="Kodira C.D."/>
            <person name="Neafsey D.E."/>
            <person name="Zeng Q."/>
            <person name="Hung C.-Y."/>
            <person name="McMahan C."/>
            <person name="Muszewska A."/>
            <person name="Grynberg M."/>
            <person name="Mandel M.A."/>
            <person name="Kellner E.M."/>
            <person name="Barker B.M."/>
            <person name="Galgiani J.N."/>
            <person name="Orbach M.J."/>
            <person name="Kirkland T.N."/>
            <person name="Cole G.T."/>
            <person name="Henn M.R."/>
            <person name="Birren B.W."/>
            <person name="Taylor J.W."/>
        </authorList>
    </citation>
    <scope>NUCLEOTIDE SEQUENCE [LARGE SCALE GENOMIC DNA]</scope>
    <source>
        <strain>RS</strain>
    </source>
</reference>
<reference key="2">
    <citation type="journal article" date="2010" name="Genome Res.">
        <title>Population genomic sequencing of Coccidioides fungi reveals recent hybridization and transposon control.</title>
        <authorList>
            <person name="Neafsey D.E."/>
            <person name="Barker B.M."/>
            <person name="Sharpton T.J."/>
            <person name="Stajich J.E."/>
            <person name="Park D.J."/>
            <person name="Whiston E."/>
            <person name="Hung C.-Y."/>
            <person name="McMahan C."/>
            <person name="White J."/>
            <person name="Sykes S."/>
            <person name="Heiman D."/>
            <person name="Young S."/>
            <person name="Zeng Q."/>
            <person name="Abouelleil A."/>
            <person name="Aftuck L."/>
            <person name="Bessette D."/>
            <person name="Brown A."/>
            <person name="FitzGerald M."/>
            <person name="Lui A."/>
            <person name="Macdonald J.P."/>
            <person name="Priest M."/>
            <person name="Orbach M.J."/>
            <person name="Galgiani J.N."/>
            <person name="Kirkland T.N."/>
            <person name="Cole G.T."/>
            <person name="Birren B.W."/>
            <person name="Henn M.R."/>
            <person name="Taylor J.W."/>
            <person name="Rounsley S.D."/>
        </authorList>
    </citation>
    <scope>GENOME REANNOTATION</scope>
    <source>
        <strain>RS</strain>
    </source>
</reference>
<protein>
    <recommendedName>
        <fullName>Mediator of RNA polymerase II transcription subunit 10</fullName>
    </recommendedName>
    <alternativeName>
        <fullName>Mediator complex subunit 10</fullName>
    </alternativeName>
</protein>